<reference key="1">
    <citation type="journal article" date="2011" name="MBio">
        <title>Novel metabolic attributes of the genus Cyanothece, comprising a group of unicellular nitrogen-fixing Cyanobacteria.</title>
        <authorList>
            <person name="Bandyopadhyay A."/>
            <person name="Elvitigala T."/>
            <person name="Welsh E."/>
            <person name="Stockel J."/>
            <person name="Liberton M."/>
            <person name="Min H."/>
            <person name="Sherman L.A."/>
            <person name="Pakrasi H.B."/>
        </authorList>
    </citation>
    <scope>NUCLEOTIDE SEQUENCE [LARGE SCALE GENOMIC DNA]</scope>
    <source>
        <strain>PCC 7425 / ATCC 29141</strain>
    </source>
</reference>
<feature type="chain" id="PRO_1000202137" description="Ribonuclease H">
    <location>
        <begin position="1"/>
        <end position="157"/>
    </location>
</feature>
<feature type="domain" description="RNase H type-1" evidence="2">
    <location>
        <begin position="2"/>
        <end position="145"/>
    </location>
</feature>
<feature type="binding site" evidence="1">
    <location>
        <position position="11"/>
    </location>
    <ligand>
        <name>Mg(2+)</name>
        <dbReference type="ChEBI" id="CHEBI:18420"/>
        <label>1</label>
    </ligand>
</feature>
<feature type="binding site" evidence="1">
    <location>
        <position position="11"/>
    </location>
    <ligand>
        <name>Mg(2+)</name>
        <dbReference type="ChEBI" id="CHEBI:18420"/>
        <label>2</label>
    </ligand>
</feature>
<feature type="binding site" evidence="1">
    <location>
        <position position="50"/>
    </location>
    <ligand>
        <name>Mg(2+)</name>
        <dbReference type="ChEBI" id="CHEBI:18420"/>
        <label>1</label>
    </ligand>
</feature>
<feature type="binding site" evidence="1">
    <location>
        <position position="74"/>
    </location>
    <ligand>
        <name>Mg(2+)</name>
        <dbReference type="ChEBI" id="CHEBI:18420"/>
        <label>1</label>
    </ligand>
</feature>
<feature type="binding site" evidence="1">
    <location>
        <position position="137"/>
    </location>
    <ligand>
        <name>Mg(2+)</name>
        <dbReference type="ChEBI" id="CHEBI:18420"/>
        <label>2</label>
    </ligand>
</feature>
<comment type="function">
    <text evidence="1">Endonuclease that specifically degrades the RNA of RNA-DNA hybrids.</text>
</comment>
<comment type="catalytic activity">
    <reaction evidence="1">
        <text>Endonucleolytic cleavage to 5'-phosphomonoester.</text>
        <dbReference type="EC" id="3.1.26.4"/>
    </reaction>
</comment>
<comment type="cofactor">
    <cofactor evidence="1">
        <name>Mg(2+)</name>
        <dbReference type="ChEBI" id="CHEBI:18420"/>
    </cofactor>
    <text evidence="1">Binds 1 Mg(2+) ion per subunit. May bind a second metal ion at a regulatory site, or after substrate binding.</text>
</comment>
<comment type="subunit">
    <text evidence="1">Monomer.</text>
</comment>
<comment type="subcellular location">
    <subcellularLocation>
        <location evidence="1">Cytoplasm</location>
    </subcellularLocation>
</comment>
<comment type="similarity">
    <text evidence="1">Belongs to the RNase H family.</text>
</comment>
<name>RNH_CYAP4</name>
<protein>
    <recommendedName>
        <fullName evidence="1">Ribonuclease H</fullName>
        <shortName evidence="1">RNase H</shortName>
        <ecNumber evidence="1">3.1.26.4</ecNumber>
    </recommendedName>
</protein>
<gene>
    <name evidence="1" type="primary">rnhA</name>
    <name type="ordered locus">Cyan7425_3313</name>
</gene>
<dbReference type="EC" id="3.1.26.4" evidence="1"/>
<dbReference type="EMBL" id="CP001344">
    <property type="protein sequence ID" value="ACL45638.1"/>
    <property type="molecule type" value="Genomic_DNA"/>
</dbReference>
<dbReference type="SMR" id="B8HPS9"/>
<dbReference type="STRING" id="395961.Cyan7425_3313"/>
<dbReference type="KEGG" id="cyn:Cyan7425_3313"/>
<dbReference type="eggNOG" id="COG0328">
    <property type="taxonomic scope" value="Bacteria"/>
</dbReference>
<dbReference type="HOGENOM" id="CLU_030894_6_0_3"/>
<dbReference type="OrthoDB" id="7845843at2"/>
<dbReference type="GO" id="GO:0005737">
    <property type="term" value="C:cytoplasm"/>
    <property type="evidence" value="ECO:0007669"/>
    <property type="project" value="UniProtKB-SubCell"/>
</dbReference>
<dbReference type="GO" id="GO:0000287">
    <property type="term" value="F:magnesium ion binding"/>
    <property type="evidence" value="ECO:0007669"/>
    <property type="project" value="UniProtKB-UniRule"/>
</dbReference>
<dbReference type="GO" id="GO:0003676">
    <property type="term" value="F:nucleic acid binding"/>
    <property type="evidence" value="ECO:0007669"/>
    <property type="project" value="InterPro"/>
</dbReference>
<dbReference type="GO" id="GO:0004523">
    <property type="term" value="F:RNA-DNA hybrid ribonuclease activity"/>
    <property type="evidence" value="ECO:0007669"/>
    <property type="project" value="UniProtKB-UniRule"/>
</dbReference>
<dbReference type="GO" id="GO:0043137">
    <property type="term" value="P:DNA replication, removal of RNA primer"/>
    <property type="evidence" value="ECO:0007669"/>
    <property type="project" value="TreeGrafter"/>
</dbReference>
<dbReference type="CDD" id="cd09278">
    <property type="entry name" value="RNase_HI_prokaryote_like"/>
    <property type="match status" value="1"/>
</dbReference>
<dbReference type="Gene3D" id="3.30.420.10">
    <property type="entry name" value="Ribonuclease H-like superfamily/Ribonuclease H"/>
    <property type="match status" value="1"/>
</dbReference>
<dbReference type="HAMAP" id="MF_00042">
    <property type="entry name" value="RNase_H"/>
    <property type="match status" value="1"/>
</dbReference>
<dbReference type="InterPro" id="IPR050092">
    <property type="entry name" value="RNase_H"/>
</dbReference>
<dbReference type="InterPro" id="IPR012337">
    <property type="entry name" value="RNaseH-like_sf"/>
</dbReference>
<dbReference type="InterPro" id="IPR002156">
    <property type="entry name" value="RNaseH_domain"/>
</dbReference>
<dbReference type="InterPro" id="IPR036397">
    <property type="entry name" value="RNaseH_sf"/>
</dbReference>
<dbReference type="InterPro" id="IPR022892">
    <property type="entry name" value="RNaseHI"/>
</dbReference>
<dbReference type="NCBIfam" id="NF001236">
    <property type="entry name" value="PRK00203.1"/>
    <property type="match status" value="1"/>
</dbReference>
<dbReference type="PANTHER" id="PTHR10642">
    <property type="entry name" value="RIBONUCLEASE H1"/>
    <property type="match status" value="1"/>
</dbReference>
<dbReference type="PANTHER" id="PTHR10642:SF26">
    <property type="entry name" value="RIBONUCLEASE H1"/>
    <property type="match status" value="1"/>
</dbReference>
<dbReference type="Pfam" id="PF00075">
    <property type="entry name" value="RNase_H"/>
    <property type="match status" value="1"/>
</dbReference>
<dbReference type="SUPFAM" id="SSF53098">
    <property type="entry name" value="Ribonuclease H-like"/>
    <property type="match status" value="1"/>
</dbReference>
<dbReference type="PROSITE" id="PS50879">
    <property type="entry name" value="RNASE_H_1"/>
    <property type="match status" value="1"/>
</dbReference>
<accession>B8HPS9</accession>
<proteinExistence type="inferred from homology"/>
<sequence>MNAEISKIYTDGACSGNPGPGGWGVVVYFGDGSVHEMGGAAAATTNNRMEMQAAIAALEFCQAAGHPPVILYTDSEYVKKGITEWLPGWKRKGWKTAQGKPVLNQDLWQVLDQLNTKSVNWQYVRGHSGNAGNERCDAIARAFAAGRQPELRQSRDL</sequence>
<keyword id="KW-0963">Cytoplasm</keyword>
<keyword id="KW-0255">Endonuclease</keyword>
<keyword id="KW-0378">Hydrolase</keyword>
<keyword id="KW-0460">Magnesium</keyword>
<keyword id="KW-0479">Metal-binding</keyword>
<keyword id="KW-0540">Nuclease</keyword>
<evidence type="ECO:0000255" key="1">
    <source>
        <dbReference type="HAMAP-Rule" id="MF_00042"/>
    </source>
</evidence>
<evidence type="ECO:0000255" key="2">
    <source>
        <dbReference type="PROSITE-ProRule" id="PRU00408"/>
    </source>
</evidence>
<organism>
    <name type="scientific">Cyanothece sp. (strain PCC 7425 / ATCC 29141)</name>
    <dbReference type="NCBI Taxonomy" id="395961"/>
    <lineage>
        <taxon>Bacteria</taxon>
        <taxon>Bacillati</taxon>
        <taxon>Cyanobacteriota</taxon>
        <taxon>Cyanophyceae</taxon>
        <taxon>Gomontiellales</taxon>
        <taxon>Cyanothecaceae</taxon>
        <taxon>Cyanothece</taxon>
    </lineage>
</organism>